<feature type="chain" id="PRO_0000273619" description="S-adenosylmethionine decarboxylase beta chain" evidence="1">
    <location>
        <begin position="1"/>
        <end position="112"/>
    </location>
</feature>
<feature type="chain" id="PRO_0000273620" description="S-adenosylmethionine decarboxylase alpha chain" evidence="1">
    <location>
        <begin position="113"/>
        <end position="264"/>
    </location>
</feature>
<feature type="active site" description="Schiff-base intermediate with substrate; via pyruvic acid" evidence="1">
    <location>
        <position position="113"/>
    </location>
</feature>
<feature type="active site" description="Proton acceptor; for processing activity" evidence="1">
    <location>
        <position position="118"/>
    </location>
</feature>
<feature type="active site" description="Proton donor; for catalytic activity" evidence="1">
    <location>
        <position position="141"/>
    </location>
</feature>
<feature type="site" description="Cleavage (non-hydrolytic); by autolysis" evidence="1">
    <location>
        <begin position="112"/>
        <end position="113"/>
    </location>
</feature>
<feature type="modified residue" description="Pyruvic acid (Ser); by autocatalysis" evidence="1">
    <location>
        <position position="113"/>
    </location>
</feature>
<accession>Q3BYB2</accession>
<evidence type="ECO:0000255" key="1">
    <source>
        <dbReference type="HAMAP-Rule" id="MF_00465"/>
    </source>
</evidence>
<gene>
    <name evidence="1" type="primary">speD</name>
    <name type="ordered locus">XCV0520</name>
</gene>
<sequence length="264" mass="30834">MVKPLPRLRLQGFNNLTKALSFNIYDVCYARTEEERQRYIEYIDEQYDADRLTQILTDVAEIIGANILNIARQDYDPQGASVTILISEEPVIDKKQAGKELISDAVVAHMDKSHITVHTYPETHPQEGIATFRADIDVATCGVISPLKALNYLIESLESDIVIMDYRVRGFTRDVKGRKHYIDHKINSIQQFLAKNVKSRYEMFDVNVYQENIFHTKMHLKDFDLDQYLFEERAKNLSFKERMKIETLLKREIEELFHGRNLSE</sequence>
<reference key="1">
    <citation type="journal article" date="2005" name="J. Bacteriol.">
        <title>Insights into genome plasticity and pathogenicity of the plant pathogenic Bacterium Xanthomonas campestris pv. vesicatoria revealed by the complete genome sequence.</title>
        <authorList>
            <person name="Thieme F."/>
            <person name="Koebnik R."/>
            <person name="Bekel T."/>
            <person name="Berger C."/>
            <person name="Boch J."/>
            <person name="Buettner D."/>
            <person name="Caldana C."/>
            <person name="Gaigalat L."/>
            <person name="Goesmann A."/>
            <person name="Kay S."/>
            <person name="Kirchner O."/>
            <person name="Lanz C."/>
            <person name="Linke B."/>
            <person name="McHardy A.C."/>
            <person name="Meyer F."/>
            <person name="Mittenhuber G."/>
            <person name="Nies D.H."/>
            <person name="Niesbach-Kloesgen U."/>
            <person name="Patschkowski T."/>
            <person name="Rueckert C."/>
            <person name="Rupp O."/>
            <person name="Schneiker S."/>
            <person name="Schuster S.C."/>
            <person name="Vorhoelter F.J."/>
            <person name="Weber E."/>
            <person name="Puehler A."/>
            <person name="Bonas U."/>
            <person name="Bartels D."/>
            <person name="Kaiser O."/>
        </authorList>
    </citation>
    <scope>NUCLEOTIDE SEQUENCE [LARGE SCALE GENOMIC DNA]</scope>
    <source>
        <strain>85-10</strain>
    </source>
</reference>
<proteinExistence type="inferred from homology"/>
<name>SPED_XANE5</name>
<comment type="function">
    <text evidence="1">Catalyzes the decarboxylation of S-adenosylmethionine to S-adenosylmethioninamine (dcAdoMet), the propylamine donor required for the synthesis of the polyamines spermine and spermidine from the diamine putrescine.</text>
</comment>
<comment type="catalytic activity">
    <reaction evidence="1">
        <text>S-adenosyl-L-methionine + H(+) = S-adenosyl 3-(methylsulfanyl)propylamine + CO2</text>
        <dbReference type="Rhea" id="RHEA:15981"/>
        <dbReference type="ChEBI" id="CHEBI:15378"/>
        <dbReference type="ChEBI" id="CHEBI:16526"/>
        <dbReference type="ChEBI" id="CHEBI:57443"/>
        <dbReference type="ChEBI" id="CHEBI:59789"/>
        <dbReference type="EC" id="4.1.1.50"/>
    </reaction>
</comment>
<comment type="cofactor">
    <cofactor evidence="1">
        <name>pyruvate</name>
        <dbReference type="ChEBI" id="CHEBI:15361"/>
    </cofactor>
    <text evidence="1">Binds 1 pyruvoyl group covalently per subunit.</text>
</comment>
<comment type="pathway">
    <text evidence="1">Amine and polyamine biosynthesis; S-adenosylmethioninamine biosynthesis; S-adenosylmethioninamine from S-adenosyl-L-methionine: step 1/1.</text>
</comment>
<comment type="subunit">
    <text evidence="1">Heterooctamer of four alpha and four beta chains arranged as a tetramer of alpha/beta heterodimers.</text>
</comment>
<comment type="PTM">
    <text evidence="1">Is synthesized initially as an inactive proenzyme. Formation of the active enzyme involves a self-maturation process in which the active site pyruvoyl group is generated from an internal serine residue via an autocatalytic post-translational modification. Two non-identical subunits are generated from the proenzyme in this reaction, and the pyruvate is formed at the N-terminus of the alpha chain, which is derived from the carboxyl end of the proenzyme. The post-translation cleavage follows an unusual pathway, termed non-hydrolytic serinolysis, in which the side chain hydroxyl group of the serine supplies its oxygen atom to form the C-terminus of the beta chain, while the remainder of the serine residue undergoes an oxidative deamination to produce ammonia and the pyruvoyl group blocking the N-terminus of the alpha chain.</text>
</comment>
<comment type="similarity">
    <text evidence="1">Belongs to the prokaryotic AdoMetDC family. Type 2 subfamily.</text>
</comment>
<dbReference type="EC" id="4.1.1.50" evidence="1"/>
<dbReference type="EMBL" id="AM039952">
    <property type="protein sequence ID" value="CAJ22151.1"/>
    <property type="molecule type" value="Genomic_DNA"/>
</dbReference>
<dbReference type="RefSeq" id="WP_011346179.1">
    <property type="nucleotide sequence ID" value="NZ_CP017190.1"/>
</dbReference>
<dbReference type="SMR" id="Q3BYB2"/>
<dbReference type="STRING" id="456327.BJD11_20275"/>
<dbReference type="KEGG" id="xcv:XCV0520"/>
<dbReference type="eggNOG" id="COG1586">
    <property type="taxonomic scope" value="Bacteria"/>
</dbReference>
<dbReference type="HOGENOM" id="CLU_092007_0_0_6"/>
<dbReference type="UniPathway" id="UPA00331">
    <property type="reaction ID" value="UER00451"/>
</dbReference>
<dbReference type="Proteomes" id="UP000007069">
    <property type="component" value="Chromosome"/>
</dbReference>
<dbReference type="GO" id="GO:0005829">
    <property type="term" value="C:cytosol"/>
    <property type="evidence" value="ECO:0007669"/>
    <property type="project" value="TreeGrafter"/>
</dbReference>
<dbReference type="GO" id="GO:0004014">
    <property type="term" value="F:adenosylmethionine decarboxylase activity"/>
    <property type="evidence" value="ECO:0007669"/>
    <property type="project" value="UniProtKB-UniRule"/>
</dbReference>
<dbReference type="GO" id="GO:0008295">
    <property type="term" value="P:spermidine biosynthetic process"/>
    <property type="evidence" value="ECO:0007669"/>
    <property type="project" value="UniProtKB-UniRule"/>
</dbReference>
<dbReference type="FunFam" id="3.60.90.10:FF:000001">
    <property type="entry name" value="S-adenosylmethionine decarboxylase proenzyme"/>
    <property type="match status" value="1"/>
</dbReference>
<dbReference type="Gene3D" id="3.60.90.10">
    <property type="entry name" value="S-adenosylmethionine decarboxylase"/>
    <property type="match status" value="1"/>
</dbReference>
<dbReference type="HAMAP" id="MF_00465">
    <property type="entry name" value="AdoMetDC_2"/>
    <property type="match status" value="1"/>
</dbReference>
<dbReference type="InterPro" id="IPR003826">
    <property type="entry name" value="AdoMetDC_fam_prok"/>
</dbReference>
<dbReference type="InterPro" id="IPR009165">
    <property type="entry name" value="S-AdoMet_deCO2ase_bac"/>
</dbReference>
<dbReference type="InterPro" id="IPR016067">
    <property type="entry name" value="S-AdoMet_deCO2ase_core"/>
</dbReference>
<dbReference type="NCBIfam" id="TIGR03331">
    <property type="entry name" value="SAM_DCase_Eco"/>
    <property type="match status" value="1"/>
</dbReference>
<dbReference type="PANTHER" id="PTHR33866">
    <property type="entry name" value="S-ADENOSYLMETHIONINE DECARBOXYLASE PROENZYME"/>
    <property type="match status" value="1"/>
</dbReference>
<dbReference type="PANTHER" id="PTHR33866:SF1">
    <property type="entry name" value="S-ADENOSYLMETHIONINE DECARBOXYLASE PROENZYME"/>
    <property type="match status" value="1"/>
</dbReference>
<dbReference type="Pfam" id="PF02675">
    <property type="entry name" value="AdoMet_dc"/>
    <property type="match status" value="1"/>
</dbReference>
<dbReference type="PIRSF" id="PIRSF001356">
    <property type="entry name" value="SAM_decarboxylas"/>
    <property type="match status" value="1"/>
</dbReference>
<dbReference type="SUPFAM" id="SSF56276">
    <property type="entry name" value="S-adenosylmethionine decarboxylase"/>
    <property type="match status" value="1"/>
</dbReference>
<protein>
    <recommendedName>
        <fullName evidence="1">S-adenosylmethionine decarboxylase proenzyme</fullName>
        <shortName evidence="1">AdoMetDC</shortName>
        <shortName evidence="1">SAMDC</shortName>
        <ecNumber evidence="1">4.1.1.50</ecNumber>
    </recommendedName>
    <component>
        <recommendedName>
            <fullName evidence="1">S-adenosylmethionine decarboxylase beta chain</fullName>
        </recommendedName>
    </component>
    <component>
        <recommendedName>
            <fullName evidence="1">S-adenosylmethionine decarboxylase alpha chain</fullName>
        </recommendedName>
    </component>
</protein>
<keyword id="KW-0068">Autocatalytic cleavage</keyword>
<keyword id="KW-0210">Decarboxylase</keyword>
<keyword id="KW-0456">Lyase</keyword>
<keyword id="KW-0620">Polyamine biosynthesis</keyword>
<keyword id="KW-0670">Pyruvate</keyword>
<keyword id="KW-0949">S-adenosyl-L-methionine</keyword>
<keyword id="KW-0704">Schiff base</keyword>
<keyword id="KW-0745">Spermidine biosynthesis</keyword>
<keyword id="KW-0865">Zymogen</keyword>
<organism>
    <name type="scientific">Xanthomonas euvesicatoria pv. vesicatoria (strain 85-10)</name>
    <name type="common">Xanthomonas campestris pv. vesicatoria</name>
    <dbReference type="NCBI Taxonomy" id="316273"/>
    <lineage>
        <taxon>Bacteria</taxon>
        <taxon>Pseudomonadati</taxon>
        <taxon>Pseudomonadota</taxon>
        <taxon>Gammaproteobacteria</taxon>
        <taxon>Lysobacterales</taxon>
        <taxon>Lysobacteraceae</taxon>
        <taxon>Xanthomonas</taxon>
    </lineage>
</organism>